<evidence type="ECO:0000255" key="1"/>
<evidence type="ECO:0000269" key="2">
    <source>
    </source>
</evidence>
<evidence type="ECO:0000269" key="3">
    <source>
    </source>
</evidence>
<evidence type="ECO:0000305" key="4"/>
<evidence type="ECO:0007829" key="5">
    <source>
        <dbReference type="PDB" id="7KAH"/>
    </source>
</evidence>
<organism>
    <name type="scientific">Saccharomyces cerevisiae (strain ATCC 204508 / S288c)</name>
    <name type="common">Baker's yeast</name>
    <dbReference type="NCBI Taxonomy" id="559292"/>
    <lineage>
        <taxon>Eukaryota</taxon>
        <taxon>Fungi</taxon>
        <taxon>Dikarya</taxon>
        <taxon>Ascomycota</taxon>
        <taxon>Saccharomycotina</taxon>
        <taxon>Saccharomycetes</taxon>
        <taxon>Saccharomycetales</taxon>
        <taxon>Saccharomycetaceae</taxon>
        <taxon>Saccharomyces</taxon>
    </lineage>
</organism>
<name>SC61G_YEAST</name>
<accession>P35179</accession>
<accession>D6VS73</accession>
<feature type="chain" id="PRO_0000104211" description="Protein transport protein SSS1">
    <location>
        <begin position="1"/>
        <end position="80"/>
    </location>
</feature>
<feature type="topological domain" description="Cytoplasmic" evidence="1">
    <location>
        <begin position="1"/>
        <end position="46"/>
    </location>
</feature>
<feature type="transmembrane region" description="Helical" evidence="1">
    <location>
        <begin position="47"/>
        <end position="75"/>
    </location>
</feature>
<feature type="topological domain" description="Extracellular" evidence="1">
    <location>
        <begin position="76"/>
        <end position="80"/>
    </location>
</feature>
<feature type="sequence conflict" description="In Ref. 1; CAA52608." evidence="4" ref="1">
    <original>F</original>
    <variation>L</variation>
    <location>
        <position position="58"/>
    </location>
</feature>
<feature type="helix" evidence="5">
    <location>
        <begin position="27"/>
        <end position="38"/>
    </location>
</feature>
<feature type="helix" evidence="5">
    <location>
        <begin position="44"/>
        <end position="79"/>
    </location>
</feature>
<sequence length="80" mass="8944">MARASEKGEEKKQSNNQVEKLVEAPVEFVREGTQFLAKCKKPDLKEYTKIVKAVGIGFIAVGIIGYAIKLIHIPIRYVIV</sequence>
<reference key="1">
    <citation type="journal article" date="1993" name="EMBO J.">
        <title>The yeast SSS1 gene is essential for secretory protein translocation and encodes a conserved protein of the endoplasmic reticulum.</title>
        <authorList>
            <person name="Esnault Y."/>
            <person name="Blondel M.-O."/>
            <person name="Deshaies R.J."/>
            <person name="Schekman R."/>
            <person name="Kepes F."/>
        </authorList>
    </citation>
    <scope>NUCLEOTIDE SEQUENCE [GENOMIC DNA]</scope>
</reference>
<reference key="2">
    <citation type="journal article" date="1997" name="Nature">
        <title>The nucleotide sequence of Saccharomyces cerevisiae chromosome IV.</title>
        <authorList>
            <person name="Jacq C."/>
            <person name="Alt-Moerbe J."/>
            <person name="Andre B."/>
            <person name="Arnold W."/>
            <person name="Bahr A."/>
            <person name="Ballesta J.P.G."/>
            <person name="Bargues M."/>
            <person name="Baron L."/>
            <person name="Becker A."/>
            <person name="Biteau N."/>
            <person name="Bloecker H."/>
            <person name="Blugeon C."/>
            <person name="Boskovic J."/>
            <person name="Brandt P."/>
            <person name="Brueckner M."/>
            <person name="Buitrago M.J."/>
            <person name="Coster F."/>
            <person name="Delaveau T."/>
            <person name="del Rey F."/>
            <person name="Dujon B."/>
            <person name="Eide L.G."/>
            <person name="Garcia-Cantalejo J.M."/>
            <person name="Goffeau A."/>
            <person name="Gomez-Peris A."/>
            <person name="Granotier C."/>
            <person name="Hanemann V."/>
            <person name="Hankeln T."/>
            <person name="Hoheisel J.D."/>
            <person name="Jaeger W."/>
            <person name="Jimenez A."/>
            <person name="Jonniaux J.-L."/>
            <person name="Kraemer C."/>
            <person name="Kuester H."/>
            <person name="Laamanen P."/>
            <person name="Legros Y."/>
            <person name="Louis E.J."/>
            <person name="Moeller-Rieker S."/>
            <person name="Monnet A."/>
            <person name="Moro M."/>
            <person name="Mueller-Auer S."/>
            <person name="Nussbaumer B."/>
            <person name="Paricio N."/>
            <person name="Paulin L."/>
            <person name="Perea J."/>
            <person name="Perez-Alonso M."/>
            <person name="Perez-Ortin J.E."/>
            <person name="Pohl T.M."/>
            <person name="Prydz H."/>
            <person name="Purnelle B."/>
            <person name="Rasmussen S.W."/>
            <person name="Remacha M.A."/>
            <person name="Revuelta J.L."/>
            <person name="Rieger M."/>
            <person name="Salom D."/>
            <person name="Saluz H.P."/>
            <person name="Saiz J.E."/>
            <person name="Saren A.-M."/>
            <person name="Schaefer M."/>
            <person name="Scharfe M."/>
            <person name="Schmidt E.R."/>
            <person name="Schneider C."/>
            <person name="Scholler P."/>
            <person name="Schwarz S."/>
            <person name="Soler-Mira A."/>
            <person name="Urrestarazu L.A."/>
            <person name="Verhasselt P."/>
            <person name="Vissers S."/>
            <person name="Voet M."/>
            <person name="Volckaert G."/>
            <person name="Wagner G."/>
            <person name="Wambutt R."/>
            <person name="Wedler E."/>
            <person name="Wedler H."/>
            <person name="Woelfl S."/>
            <person name="Harris D.E."/>
            <person name="Bowman S."/>
            <person name="Brown D."/>
            <person name="Churcher C.M."/>
            <person name="Connor R."/>
            <person name="Dedman K."/>
            <person name="Gentles S."/>
            <person name="Hamlin N."/>
            <person name="Hunt S."/>
            <person name="Jones L."/>
            <person name="McDonald S."/>
            <person name="Murphy L.D."/>
            <person name="Niblett D."/>
            <person name="Odell C."/>
            <person name="Oliver K."/>
            <person name="Rajandream M.A."/>
            <person name="Richards C."/>
            <person name="Shore L."/>
            <person name="Walsh S.V."/>
            <person name="Barrell B.G."/>
            <person name="Dietrich F.S."/>
            <person name="Mulligan J.T."/>
            <person name="Allen E."/>
            <person name="Araujo R."/>
            <person name="Aviles E."/>
            <person name="Berno A."/>
            <person name="Carpenter J."/>
            <person name="Chen E."/>
            <person name="Cherry J.M."/>
            <person name="Chung E."/>
            <person name="Duncan M."/>
            <person name="Hunicke-Smith S."/>
            <person name="Hyman R.W."/>
            <person name="Komp C."/>
            <person name="Lashkari D."/>
            <person name="Lew H."/>
            <person name="Lin D."/>
            <person name="Mosedale D."/>
            <person name="Nakahara K."/>
            <person name="Namath A."/>
            <person name="Oefner P."/>
            <person name="Oh C."/>
            <person name="Petel F.X."/>
            <person name="Roberts D."/>
            <person name="Schramm S."/>
            <person name="Schroeder M."/>
            <person name="Shogren T."/>
            <person name="Shroff N."/>
            <person name="Winant A."/>
            <person name="Yelton M.A."/>
            <person name="Botstein D."/>
            <person name="Davis R.W."/>
            <person name="Johnston M."/>
            <person name="Andrews S."/>
            <person name="Brinkman R."/>
            <person name="Cooper J."/>
            <person name="Ding H."/>
            <person name="Du Z."/>
            <person name="Favello A."/>
            <person name="Fulton L."/>
            <person name="Gattung S."/>
            <person name="Greco T."/>
            <person name="Hallsworth K."/>
            <person name="Hawkins J."/>
            <person name="Hillier L.W."/>
            <person name="Jier M."/>
            <person name="Johnson D."/>
            <person name="Johnston L."/>
            <person name="Kirsten J."/>
            <person name="Kucaba T."/>
            <person name="Langston Y."/>
            <person name="Latreille P."/>
            <person name="Le T."/>
            <person name="Mardis E."/>
            <person name="Menezes S."/>
            <person name="Miller N."/>
            <person name="Nhan M."/>
            <person name="Pauley A."/>
            <person name="Peluso D."/>
            <person name="Rifkin L."/>
            <person name="Riles L."/>
            <person name="Taich A."/>
            <person name="Trevaskis E."/>
            <person name="Vignati D."/>
            <person name="Wilcox L."/>
            <person name="Wohldman P."/>
            <person name="Vaudin M."/>
            <person name="Wilson R."/>
            <person name="Waterston R."/>
            <person name="Albermann K."/>
            <person name="Hani J."/>
            <person name="Heumann K."/>
            <person name="Kleine K."/>
            <person name="Mewes H.-W."/>
            <person name="Zollner A."/>
            <person name="Zaccaria P."/>
        </authorList>
    </citation>
    <scope>NUCLEOTIDE SEQUENCE [LARGE SCALE GENOMIC DNA]</scope>
    <source>
        <strain>ATCC 204508 / S288c</strain>
    </source>
</reference>
<reference key="3">
    <citation type="journal article" date="2014" name="G3 (Bethesda)">
        <title>The reference genome sequence of Saccharomyces cerevisiae: Then and now.</title>
        <authorList>
            <person name="Engel S.R."/>
            <person name="Dietrich F.S."/>
            <person name="Fisk D.G."/>
            <person name="Binkley G."/>
            <person name="Balakrishnan R."/>
            <person name="Costanzo M.C."/>
            <person name="Dwight S.S."/>
            <person name="Hitz B.C."/>
            <person name="Karra K."/>
            <person name="Nash R.S."/>
            <person name="Weng S."/>
            <person name="Wong E.D."/>
            <person name="Lloyd P."/>
            <person name="Skrzypek M.S."/>
            <person name="Miyasato S.R."/>
            <person name="Simison M."/>
            <person name="Cherry J.M."/>
        </authorList>
    </citation>
    <scope>GENOME REANNOTATION</scope>
    <source>
        <strain>ATCC 204508 / S288c</strain>
    </source>
</reference>
<reference key="4">
    <citation type="journal article" date="2007" name="Genome Res.">
        <title>Approaching a complete repository of sequence-verified protein-encoding clones for Saccharomyces cerevisiae.</title>
        <authorList>
            <person name="Hu Y."/>
            <person name="Rolfs A."/>
            <person name="Bhullar B."/>
            <person name="Murthy T.V.S."/>
            <person name="Zhu C."/>
            <person name="Berger M.F."/>
            <person name="Camargo A.A."/>
            <person name="Kelley F."/>
            <person name="McCarron S."/>
            <person name="Jepson D."/>
            <person name="Richardson A."/>
            <person name="Raphael J."/>
            <person name="Moreira D."/>
            <person name="Taycher E."/>
            <person name="Zuo D."/>
            <person name="Mohr S."/>
            <person name="Kane M.F."/>
            <person name="Williamson J."/>
            <person name="Simpson A.J.G."/>
            <person name="Bulyk M.L."/>
            <person name="Harlow E."/>
            <person name="Marsischky G."/>
            <person name="Kolodner R.D."/>
            <person name="LaBaer J."/>
        </authorList>
    </citation>
    <scope>NUCLEOTIDE SEQUENCE [GENOMIC DNA]</scope>
    <source>
        <strain>ATCC 204508 / S288c</strain>
    </source>
</reference>
<reference key="5">
    <citation type="journal article" date="1996" name="Cell">
        <title>Oligomeric rings of the Sec61p complex induced by ligands required for protein translocation.</title>
        <authorList>
            <person name="Hanein D."/>
            <person name="Matlack K.E."/>
            <person name="Jungnickel B."/>
            <person name="Plath K."/>
            <person name="Kalies K.-U."/>
            <person name="Miller K.R."/>
            <person name="Rapoport T.A."/>
            <person name="Akey C.W."/>
        </authorList>
    </citation>
    <scope>ELECTRON MICROSCOPY OF THE SEC61 COMPLEX</scope>
</reference>
<reference key="6">
    <citation type="journal article" date="1997" name="Cell">
        <title>The aqueous pore through the translocon has a diameter of 40-60 A during cotranslational protein translocation at the ER membrane.</title>
        <authorList>
            <person name="Hamman B.D."/>
            <person name="Chen J.C."/>
            <person name="Johnson E.E."/>
            <person name="Johnson A.E."/>
        </authorList>
    </citation>
    <scope>TRANSLOCON COMPLEX PORE</scope>
</reference>
<reference key="7">
    <citation type="journal article" date="1999" name="Annu. Rev. Cell Dev. Biol.">
        <title>The translocon: a dynamic gateway at the ER membrane.</title>
        <authorList>
            <person name="Johnson A.E."/>
            <person name="van Waes M.A."/>
        </authorList>
    </citation>
    <scope>REVIEW ON THE TRANSLOCON COMPLEX</scope>
</reference>
<reference key="8">
    <citation type="journal article" date="2000" name="EMBO J.">
        <title>Evolutionarily conserved binding of ribosomes to the translocation channel via the large ribosomal RNA.</title>
        <authorList>
            <person name="Prinz A."/>
            <person name="Behrens C."/>
            <person name="Rapoport T.A."/>
            <person name="Hartmann E."/>
            <person name="Kalies K.-U."/>
        </authorList>
    </citation>
    <scope>ASSOCIATION OF THE SEC61 COMPLEX WITH RIBOSOMES</scope>
</reference>
<reference key="9">
    <citation type="journal article" date="2003" name="Nature">
        <title>Global analysis of protein localization in budding yeast.</title>
        <authorList>
            <person name="Huh W.-K."/>
            <person name="Falvo J.V."/>
            <person name="Gerke L.C."/>
            <person name="Carroll A.S."/>
            <person name="Howson R.W."/>
            <person name="Weissman J.S."/>
            <person name="O'Shea E.K."/>
        </authorList>
    </citation>
    <scope>SUBCELLULAR LOCATION [LARGE SCALE ANALYSIS]</scope>
</reference>
<reference key="10">
    <citation type="journal article" date="2005" name="J. Biol. Chem.">
        <title>Subunits of the translocon interact with components of the oligosaccharyl transferase complex.</title>
        <authorList>
            <person name="Chavan M."/>
            <person name="Yan A."/>
            <person name="Lennarz W.J."/>
        </authorList>
    </citation>
    <scope>INTERACTION WITH OST1; OST4; SWP1 AND WBP1</scope>
</reference>
<comment type="function">
    <text>Part of the Sec61 complex, which is the major component of channel-forming translocon complex that mediates protein translocation across the endoplasmic reticulum (ER). The functional states of the translocon complex include co- and post-translational ER import, cotranslational membrane protein integration and retrograde transport of misfolded proteins out of the ER. In the cotranslational pathway, ribosomes synthesizing presecretory proteins are targeted to the translocon by the cytosolic signal recognition particle (SRP) and its ER-localized receptor. The association of the Sec61 complex with the ribosome is mediated by the 28S rRNA of the large ribosomal subunit. SRP-independent post-translational translocation requires the association of additional factors, such as the Sec62/63 complex and KAR2. Also part of the Ssh1 complex, which probably is the major component of a channel-forming translocon complex that may function exclusively in the cotranslational pathway of protein ER import.</text>
</comment>
<comment type="subunit">
    <text evidence="3">Component of the heterotrimeric Sec61 complex, which is composed of SSH1, SBH1 and SSS1. Presumably three to four Sec61 heterotrimers assemble into an oligomeric ring with a central aqueous pore. In cotranslational ER import, the pore diameter varies from 9-15 A in a ribosome-free resting state to 40-60 A in a functional state when associated with the ribosome. The Sec61 complex is part of a channel-forming translocon complex whose composition seem to change dependent upon different functional states. During post-translational ER import the Sec61 complex associates with the Sec62/63 complex to form the Sec complex. SSH1 is a component of the heterotrimeric Ssh1 complex, which is composed of SSH1, SBH2 and SSS1. SSS1 interacts with OST1, OST4, SWP1 and WBP1, components of the OT complex.</text>
</comment>
<comment type="interaction">
    <interactant intactId="EBI-16406">
        <id>P35179</id>
    </interactant>
    <interactant intactId="EBI-12651">
        <id>P41543</id>
        <label>OST1</label>
    </interactant>
    <organismsDiffer>false</organismsDiffer>
    <experiments>2</experiments>
</comment>
<comment type="interaction">
    <interactant intactId="EBI-16406">
        <id>P35179</id>
    </interactant>
    <interactant intactId="EBI-12689">
        <id>Q99380</id>
        <label>OST4</label>
    </interactant>
    <organismsDiffer>false</organismsDiffer>
    <experiments>2</experiments>
</comment>
<comment type="interaction">
    <interactant intactId="EBI-16406">
        <id>P35179</id>
    </interactant>
    <interactant intactId="EBI-16400">
        <id>P32915</id>
        <label>SEC61</label>
    </interactant>
    <organismsDiffer>false</organismsDiffer>
    <experiments>17</experiments>
</comment>
<comment type="interaction">
    <interactant intactId="EBI-16406">
        <id>P35179</id>
    </interactant>
    <interactant intactId="EBI-18175">
        <id>P38353</id>
        <label>SSH1</label>
    </interactant>
    <organismsDiffer>false</organismsDiffer>
    <experiments>8</experiments>
</comment>
<comment type="interaction">
    <interactant intactId="EBI-16406">
        <id>P35179</id>
    </interactant>
    <interactant intactId="EBI-12666">
        <id>Q02795</id>
        <label>SWP1</label>
    </interactant>
    <organismsDiffer>false</organismsDiffer>
    <experiments>2</experiments>
</comment>
<comment type="interaction">
    <interactant intactId="EBI-16406">
        <id>P35179</id>
    </interactant>
    <interactant intactId="EBI-12658">
        <id>P33767</id>
        <label>WBP1</label>
    </interactant>
    <organismsDiffer>false</organismsDiffer>
    <experiments>2</experiments>
</comment>
<comment type="subcellular location">
    <subcellularLocation>
        <location evidence="2">Endoplasmic reticulum membrane</location>
        <topology evidence="2">Single-pass membrane protein</topology>
    </subcellularLocation>
</comment>
<comment type="similarity">
    <text evidence="4">Belongs to the SecE/SEC61-gamma family.</text>
</comment>
<proteinExistence type="evidence at protein level"/>
<dbReference type="EMBL" id="Z46796">
    <property type="protein sequence ID" value="CAA86808.1"/>
    <property type="molecule type" value="Genomic_DNA"/>
</dbReference>
<dbReference type="EMBL" id="X74499">
    <property type="protein sequence ID" value="CAA52608.1"/>
    <property type="molecule type" value="Genomic_DNA"/>
</dbReference>
<dbReference type="EMBL" id="X82086">
    <property type="protein sequence ID" value="CAA57615.1"/>
    <property type="molecule type" value="Genomic_DNA"/>
</dbReference>
<dbReference type="EMBL" id="Z74382">
    <property type="protein sequence ID" value="CAA98906.1"/>
    <property type="molecule type" value="Genomic_DNA"/>
</dbReference>
<dbReference type="EMBL" id="AY557659">
    <property type="protein sequence ID" value="AAS55985.1"/>
    <property type="molecule type" value="Genomic_DNA"/>
</dbReference>
<dbReference type="EMBL" id="BK006938">
    <property type="protein sequence ID" value="DAA11933.1"/>
    <property type="molecule type" value="Genomic_DNA"/>
</dbReference>
<dbReference type="PIR" id="S48775">
    <property type="entry name" value="S48775"/>
</dbReference>
<dbReference type="RefSeq" id="NP_010371.1">
    <property type="nucleotide sequence ID" value="NM_001180394.1"/>
</dbReference>
<dbReference type="PDB" id="2WW9">
    <property type="method" value="EM"/>
    <property type="resolution" value="8.60 A"/>
    <property type="chains" value="B=1-80"/>
</dbReference>
<dbReference type="PDB" id="2WWA">
    <property type="method" value="EM"/>
    <property type="resolution" value="8.90 A"/>
    <property type="chains" value="B=1-80"/>
</dbReference>
<dbReference type="PDB" id="6N3Q">
    <property type="method" value="EM"/>
    <property type="resolution" value="3.68 A"/>
    <property type="chains" value="C=1-80"/>
</dbReference>
<dbReference type="PDB" id="6ND1">
    <property type="method" value="EM"/>
    <property type="resolution" value="4.10 A"/>
    <property type="chains" value="C=1-80"/>
</dbReference>
<dbReference type="PDB" id="7AFT">
    <property type="method" value="EM"/>
    <property type="resolution" value="4.40 A"/>
    <property type="chains" value="C=1-80"/>
</dbReference>
<dbReference type="PDB" id="7KAH">
    <property type="method" value="EM"/>
    <property type="resolution" value="3.10 A"/>
    <property type="chains" value="C=1-80"/>
</dbReference>
<dbReference type="PDB" id="7KAI">
    <property type="method" value="EM"/>
    <property type="resolution" value="3.20 A"/>
    <property type="chains" value="C=1-80"/>
</dbReference>
<dbReference type="PDB" id="7KAJ">
    <property type="method" value="EM"/>
    <property type="resolution" value="3.10 A"/>
    <property type="chains" value="C=1-80"/>
</dbReference>
<dbReference type="PDB" id="7KAO">
    <property type="method" value="EM"/>
    <property type="resolution" value="4.00 A"/>
    <property type="chains" value="C=1-80"/>
</dbReference>
<dbReference type="PDB" id="7KAP">
    <property type="method" value="EM"/>
    <property type="resolution" value="4.10 A"/>
    <property type="chains" value="C=1-80"/>
</dbReference>
<dbReference type="PDB" id="7KAQ">
    <property type="method" value="EM"/>
    <property type="resolution" value="4.00 A"/>
    <property type="chains" value="C=1-80"/>
</dbReference>
<dbReference type="PDB" id="7KAR">
    <property type="method" value="EM"/>
    <property type="resolution" value="4.00 A"/>
    <property type="chains" value="C=1-80"/>
</dbReference>
<dbReference type="PDB" id="7KAS">
    <property type="method" value="EM"/>
    <property type="resolution" value="3.90 A"/>
    <property type="chains" value="C=1-80"/>
</dbReference>
<dbReference type="PDB" id="7KAT">
    <property type="method" value="EM"/>
    <property type="resolution" value="4.40 A"/>
    <property type="chains" value="C=1-80"/>
</dbReference>
<dbReference type="PDB" id="7KAU">
    <property type="method" value="EM"/>
    <property type="resolution" value="4.00 A"/>
    <property type="chains" value="C=1-80"/>
</dbReference>
<dbReference type="PDB" id="7KB5">
    <property type="method" value="EM"/>
    <property type="resolution" value="3.80 A"/>
    <property type="chains" value="C=1-80"/>
</dbReference>
<dbReference type="PDBsum" id="2WW9"/>
<dbReference type="PDBsum" id="2WWA"/>
<dbReference type="PDBsum" id="6N3Q"/>
<dbReference type="PDBsum" id="6ND1"/>
<dbReference type="PDBsum" id="7AFT"/>
<dbReference type="PDBsum" id="7KAH"/>
<dbReference type="PDBsum" id="7KAI"/>
<dbReference type="PDBsum" id="7KAJ"/>
<dbReference type="PDBsum" id="7KAO"/>
<dbReference type="PDBsum" id="7KAP"/>
<dbReference type="PDBsum" id="7KAQ"/>
<dbReference type="PDBsum" id="7KAR"/>
<dbReference type="PDBsum" id="7KAS"/>
<dbReference type="PDBsum" id="7KAT"/>
<dbReference type="PDBsum" id="7KAU"/>
<dbReference type="PDBsum" id="7KB5"/>
<dbReference type="EMDB" id="EMD-0336"/>
<dbReference type="EMDB" id="EMD-0440"/>
<dbReference type="EMDB" id="EMD-11774"/>
<dbReference type="EMDB" id="EMD-22770"/>
<dbReference type="EMDB" id="EMD-22771"/>
<dbReference type="EMDB" id="EMD-22772"/>
<dbReference type="EMDB" id="EMD-22778"/>
<dbReference type="EMDB" id="EMD-22779"/>
<dbReference type="EMDB" id="EMD-22780"/>
<dbReference type="EMDB" id="EMD-22781"/>
<dbReference type="EMDB" id="EMD-22782"/>
<dbReference type="EMDB" id="EMD-22783"/>
<dbReference type="EMDB" id="EMD-22784"/>
<dbReference type="EMDB" id="EMD-22787"/>
<dbReference type="SMR" id="P35179"/>
<dbReference type="BioGRID" id="32142">
    <property type="interactions" value="307"/>
</dbReference>
<dbReference type="ComplexPortal" id="CPX-1833">
    <property type="entry name" value="SEC61 protein-conducting channel complex"/>
</dbReference>
<dbReference type="ComplexPortal" id="CPX-1834">
    <property type="entry name" value="SSH1 translocon complex"/>
</dbReference>
<dbReference type="ComplexPortal" id="CPX-3055">
    <property type="entry name" value="Translocon complex"/>
</dbReference>
<dbReference type="DIP" id="DIP-2432N"/>
<dbReference type="FunCoup" id="P35179">
    <property type="interactions" value="661"/>
</dbReference>
<dbReference type="IntAct" id="P35179">
    <property type="interactions" value="16"/>
</dbReference>
<dbReference type="MINT" id="P35179"/>
<dbReference type="STRING" id="4932.YDR086C"/>
<dbReference type="TCDB" id="3.A.5.8.1">
    <property type="family name" value="the general secretory pathway (sec) family"/>
</dbReference>
<dbReference type="iPTMnet" id="P35179"/>
<dbReference type="PaxDb" id="4932-YDR086C"/>
<dbReference type="PeptideAtlas" id="P35179"/>
<dbReference type="TopDownProteomics" id="P35179"/>
<dbReference type="EnsemblFungi" id="YDR086C_mRNA">
    <property type="protein sequence ID" value="YDR086C"/>
    <property type="gene ID" value="YDR086C"/>
</dbReference>
<dbReference type="GeneID" id="851659"/>
<dbReference type="KEGG" id="sce:YDR086C"/>
<dbReference type="AGR" id="SGD:S000002493"/>
<dbReference type="SGD" id="S000002493">
    <property type="gene designation" value="SSS1"/>
</dbReference>
<dbReference type="VEuPathDB" id="FungiDB:YDR086C"/>
<dbReference type="eggNOG" id="KOG3498">
    <property type="taxonomic scope" value="Eukaryota"/>
</dbReference>
<dbReference type="GeneTree" id="ENSGT00390000001319"/>
<dbReference type="HOGENOM" id="CLU_167752_2_0_1"/>
<dbReference type="InParanoid" id="P35179"/>
<dbReference type="OMA" id="KPDQKEY"/>
<dbReference type="OrthoDB" id="2401875at2759"/>
<dbReference type="BioCyc" id="YEAST:G3O-29691-MONOMER"/>
<dbReference type="Reactome" id="R-SCE-9609523">
    <property type="pathway name" value="Insertion of tail-anchored proteins into the endoplasmic reticulum membrane"/>
</dbReference>
<dbReference type="BioGRID-ORCS" id="851659">
    <property type="hits" value="9 hits in 10 CRISPR screens"/>
</dbReference>
<dbReference type="EvolutionaryTrace" id="P35179"/>
<dbReference type="PRO" id="PR:P35179"/>
<dbReference type="Proteomes" id="UP000002311">
    <property type="component" value="Chromosome IV"/>
</dbReference>
<dbReference type="RNAct" id="P35179">
    <property type="molecule type" value="protein"/>
</dbReference>
<dbReference type="GO" id="GO:0005783">
    <property type="term" value="C:endoplasmic reticulum"/>
    <property type="evidence" value="ECO:0007005"/>
    <property type="project" value="SGD"/>
</dbReference>
<dbReference type="GO" id="GO:0005789">
    <property type="term" value="C:endoplasmic reticulum membrane"/>
    <property type="evidence" value="ECO:0000303"/>
    <property type="project" value="ComplexPortal"/>
</dbReference>
<dbReference type="GO" id="GO:0005637">
    <property type="term" value="C:nuclear inner membrane"/>
    <property type="evidence" value="ECO:0000314"/>
    <property type="project" value="SGD"/>
</dbReference>
<dbReference type="GO" id="GO:0030867">
    <property type="term" value="C:rough endoplasmic reticulum membrane"/>
    <property type="evidence" value="ECO:0000303"/>
    <property type="project" value="ComplexPortal"/>
</dbReference>
<dbReference type="GO" id="GO:0005784">
    <property type="term" value="C:Sec61 translocon complex"/>
    <property type="evidence" value="ECO:0000314"/>
    <property type="project" value="SGD"/>
</dbReference>
<dbReference type="GO" id="GO:0071261">
    <property type="term" value="C:Ssh1 translocon complex"/>
    <property type="evidence" value="ECO:0000314"/>
    <property type="project" value="SGD"/>
</dbReference>
<dbReference type="GO" id="GO:0071256">
    <property type="term" value="C:translocon complex"/>
    <property type="evidence" value="ECO:0000353"/>
    <property type="project" value="ComplexPortal"/>
</dbReference>
<dbReference type="GO" id="GO:0008320">
    <property type="term" value="F:protein transmembrane transporter activity"/>
    <property type="evidence" value="ECO:0000314"/>
    <property type="project" value="SGD"/>
</dbReference>
<dbReference type="GO" id="GO:0005198">
    <property type="term" value="F:structural molecule activity"/>
    <property type="evidence" value="ECO:0000315"/>
    <property type="project" value="SGD"/>
</dbReference>
<dbReference type="GO" id="GO:0031204">
    <property type="term" value="P:post-translational protein targeting to membrane, translocation"/>
    <property type="evidence" value="ECO:0000314"/>
    <property type="project" value="SGD"/>
</dbReference>
<dbReference type="GO" id="GO:0006614">
    <property type="term" value="P:SRP-dependent cotranslational protein targeting to membrane"/>
    <property type="evidence" value="ECO:0000303"/>
    <property type="project" value="ComplexPortal"/>
</dbReference>
<dbReference type="GO" id="GO:0006616">
    <property type="term" value="P:SRP-dependent cotranslational protein targeting to membrane, translocation"/>
    <property type="evidence" value="ECO:0000315"/>
    <property type="project" value="SGD"/>
</dbReference>
<dbReference type="FunFam" id="1.20.5.820:FF:000002">
    <property type="entry name" value="Sec61 trimeric complex component"/>
    <property type="match status" value="1"/>
</dbReference>
<dbReference type="Gene3D" id="1.20.5.820">
    <property type="entry name" value="Preprotein translocase SecE subunit"/>
    <property type="match status" value="1"/>
</dbReference>
<dbReference type="HAMAP" id="MF_00422">
    <property type="entry name" value="SecE"/>
    <property type="match status" value="1"/>
</dbReference>
<dbReference type="InterPro" id="IPR023391">
    <property type="entry name" value="Prot_translocase_SecE_dom_sf"/>
</dbReference>
<dbReference type="InterPro" id="IPR008158">
    <property type="entry name" value="Translocase_Sec61-g"/>
</dbReference>
<dbReference type="InterPro" id="IPR001901">
    <property type="entry name" value="Translocase_SecE/Sec61-g"/>
</dbReference>
<dbReference type="NCBIfam" id="TIGR00327">
    <property type="entry name" value="secE_euk_arch"/>
    <property type="match status" value="1"/>
</dbReference>
<dbReference type="PANTHER" id="PTHR12309">
    <property type="entry name" value="SEC61 GAMMA SUBUNIT"/>
    <property type="match status" value="1"/>
</dbReference>
<dbReference type="Pfam" id="PF00584">
    <property type="entry name" value="SecE"/>
    <property type="match status" value="1"/>
</dbReference>
<dbReference type="SUPFAM" id="SSF103456">
    <property type="entry name" value="Preprotein translocase SecE subunit"/>
    <property type="match status" value="1"/>
</dbReference>
<dbReference type="PROSITE" id="PS01067">
    <property type="entry name" value="SECE_SEC61G"/>
    <property type="match status" value="1"/>
</dbReference>
<gene>
    <name type="primary">SSS1</name>
    <name type="ordered locus">YDR086C</name>
    <name type="ORF">D4475</name>
</gene>
<protein>
    <recommendedName>
        <fullName>Protein transport protein SSS1</fullName>
    </recommendedName>
    <alternativeName>
        <fullName>Sec61 complex subunit SSS1</fullName>
    </alternativeName>
    <alternativeName>
        <fullName>Sec61 complex subunit gamma</fullName>
    </alternativeName>
    <alternativeName>
        <fullName>Ssh1 complex subunit SSS1</fullName>
    </alternativeName>
    <alternativeName>
        <fullName>Ssh1 complex subunit gamma</fullName>
    </alternativeName>
</protein>
<keyword id="KW-0002">3D-structure</keyword>
<keyword id="KW-0256">Endoplasmic reticulum</keyword>
<keyword id="KW-0472">Membrane</keyword>
<keyword id="KW-0653">Protein transport</keyword>
<keyword id="KW-1185">Reference proteome</keyword>
<keyword id="KW-0811">Translocation</keyword>
<keyword id="KW-0812">Transmembrane</keyword>
<keyword id="KW-1133">Transmembrane helix</keyword>
<keyword id="KW-0813">Transport</keyword>